<reference key="1">
    <citation type="journal article" date="2005" name="J. Bacteriol.">
        <title>Swine and poultry pathogens: the complete genome sequences of two strains of Mycoplasma hyopneumoniae and a strain of Mycoplasma synoviae.</title>
        <authorList>
            <person name="Vasconcelos A.T.R."/>
            <person name="Ferreira H.B."/>
            <person name="Bizarro C.V."/>
            <person name="Bonatto S.L."/>
            <person name="Carvalho M.O."/>
            <person name="Pinto P.M."/>
            <person name="Almeida D.F."/>
            <person name="Almeida L.G.P."/>
            <person name="Almeida R."/>
            <person name="Alves-Junior L."/>
            <person name="Assuncao E.N."/>
            <person name="Azevedo V.A.C."/>
            <person name="Bogo M.R."/>
            <person name="Brigido M.M."/>
            <person name="Brocchi M."/>
            <person name="Burity H.A."/>
            <person name="Camargo A.A."/>
            <person name="Camargo S.S."/>
            <person name="Carepo M.S."/>
            <person name="Carraro D.M."/>
            <person name="de Mattos Cascardo J.C."/>
            <person name="Castro L.A."/>
            <person name="Cavalcanti G."/>
            <person name="Chemale G."/>
            <person name="Collevatti R.G."/>
            <person name="Cunha C.W."/>
            <person name="Dallagiovanna B."/>
            <person name="Dambros B.P."/>
            <person name="Dellagostin O.A."/>
            <person name="Falcao C."/>
            <person name="Fantinatti-Garboggini F."/>
            <person name="Felipe M.S.S."/>
            <person name="Fiorentin L."/>
            <person name="Franco G.R."/>
            <person name="Freitas N.S.A."/>
            <person name="Frias D."/>
            <person name="Grangeiro T.B."/>
            <person name="Grisard E.C."/>
            <person name="Guimaraes C.T."/>
            <person name="Hungria M."/>
            <person name="Jardim S.N."/>
            <person name="Krieger M.A."/>
            <person name="Laurino J.P."/>
            <person name="Lima L.F.A."/>
            <person name="Lopes M.I."/>
            <person name="Loreto E.L.S."/>
            <person name="Madeira H.M.F."/>
            <person name="Manfio G.P."/>
            <person name="Maranhao A.Q."/>
            <person name="Martinkovics C.T."/>
            <person name="Medeiros S.R.B."/>
            <person name="Moreira M.A.M."/>
            <person name="Neiva M."/>
            <person name="Ramalho-Neto C.E."/>
            <person name="Nicolas M.F."/>
            <person name="Oliveira S.C."/>
            <person name="Paixao R.F.C."/>
            <person name="Pedrosa F.O."/>
            <person name="Pena S.D.J."/>
            <person name="Pereira M."/>
            <person name="Pereira-Ferrari L."/>
            <person name="Piffer I."/>
            <person name="Pinto L.S."/>
            <person name="Potrich D.P."/>
            <person name="Salim A.C.M."/>
            <person name="Santos F.R."/>
            <person name="Schmitt R."/>
            <person name="Schneider M.P.C."/>
            <person name="Schrank A."/>
            <person name="Schrank I.S."/>
            <person name="Schuck A.F."/>
            <person name="Seuanez H.N."/>
            <person name="Silva D.W."/>
            <person name="Silva R."/>
            <person name="Silva S.C."/>
            <person name="Soares C.M.A."/>
            <person name="Souza K.R.L."/>
            <person name="Souza R.C."/>
            <person name="Staats C.C."/>
            <person name="Steffens M.B.R."/>
            <person name="Teixeira S.M.R."/>
            <person name="Urmenyi T.P."/>
            <person name="Vainstein M.H."/>
            <person name="Zuccherato L.W."/>
            <person name="Simpson A.J.G."/>
            <person name="Zaha A."/>
        </authorList>
    </citation>
    <scope>NUCLEOTIDE SEQUENCE [LARGE SCALE GENOMIC DNA]</scope>
    <source>
        <strain>53</strain>
    </source>
</reference>
<feature type="chain" id="PRO_0000104767" description="Large ribosomal subunit protein uL15">
    <location>
        <begin position="1"/>
        <end position="149"/>
    </location>
</feature>
<feature type="region of interest" description="Disordered" evidence="2">
    <location>
        <begin position="1"/>
        <end position="54"/>
    </location>
</feature>
<feature type="compositionally biased region" description="Basic residues" evidence="2">
    <location>
        <begin position="17"/>
        <end position="28"/>
    </location>
</feature>
<protein>
    <recommendedName>
        <fullName evidence="1">Large ribosomal subunit protein uL15</fullName>
    </recommendedName>
    <alternativeName>
        <fullName evidence="3">50S ribosomal protein L15</fullName>
    </alternativeName>
</protein>
<dbReference type="EMBL" id="AE017245">
    <property type="protein sequence ID" value="AAZ44032.2"/>
    <property type="molecule type" value="Genomic_DNA"/>
</dbReference>
<dbReference type="RefSeq" id="WP_020003142.1">
    <property type="nucleotide sequence ID" value="NC_007294.1"/>
</dbReference>
<dbReference type="SMR" id="Q4A5D9"/>
<dbReference type="STRING" id="262723.MS53_0625"/>
<dbReference type="GeneID" id="93530416"/>
<dbReference type="KEGG" id="msy:MS53_0625"/>
<dbReference type="eggNOG" id="COG0200">
    <property type="taxonomic scope" value="Bacteria"/>
</dbReference>
<dbReference type="HOGENOM" id="CLU_055188_4_1_14"/>
<dbReference type="Proteomes" id="UP000000549">
    <property type="component" value="Chromosome"/>
</dbReference>
<dbReference type="GO" id="GO:0022625">
    <property type="term" value="C:cytosolic large ribosomal subunit"/>
    <property type="evidence" value="ECO:0007669"/>
    <property type="project" value="TreeGrafter"/>
</dbReference>
<dbReference type="GO" id="GO:0019843">
    <property type="term" value="F:rRNA binding"/>
    <property type="evidence" value="ECO:0007669"/>
    <property type="project" value="UniProtKB-UniRule"/>
</dbReference>
<dbReference type="GO" id="GO:0003735">
    <property type="term" value="F:structural constituent of ribosome"/>
    <property type="evidence" value="ECO:0007669"/>
    <property type="project" value="InterPro"/>
</dbReference>
<dbReference type="GO" id="GO:0006412">
    <property type="term" value="P:translation"/>
    <property type="evidence" value="ECO:0007669"/>
    <property type="project" value="UniProtKB-UniRule"/>
</dbReference>
<dbReference type="Gene3D" id="3.100.10.10">
    <property type="match status" value="1"/>
</dbReference>
<dbReference type="HAMAP" id="MF_01341">
    <property type="entry name" value="Ribosomal_uL15"/>
    <property type="match status" value="1"/>
</dbReference>
<dbReference type="InterPro" id="IPR030878">
    <property type="entry name" value="Ribosomal_uL15"/>
</dbReference>
<dbReference type="InterPro" id="IPR021131">
    <property type="entry name" value="Ribosomal_uL15/eL18"/>
</dbReference>
<dbReference type="InterPro" id="IPR036227">
    <property type="entry name" value="Ribosomal_uL15/eL18_sf"/>
</dbReference>
<dbReference type="InterPro" id="IPR005749">
    <property type="entry name" value="Ribosomal_uL15_bac-type"/>
</dbReference>
<dbReference type="InterPro" id="IPR001196">
    <property type="entry name" value="Ribosomal_uL15_CS"/>
</dbReference>
<dbReference type="NCBIfam" id="TIGR01071">
    <property type="entry name" value="rplO_bact"/>
    <property type="match status" value="1"/>
</dbReference>
<dbReference type="PANTHER" id="PTHR12934">
    <property type="entry name" value="50S RIBOSOMAL PROTEIN L15"/>
    <property type="match status" value="1"/>
</dbReference>
<dbReference type="PANTHER" id="PTHR12934:SF11">
    <property type="entry name" value="LARGE RIBOSOMAL SUBUNIT PROTEIN UL15M"/>
    <property type="match status" value="1"/>
</dbReference>
<dbReference type="Pfam" id="PF00828">
    <property type="entry name" value="Ribosomal_L27A"/>
    <property type="match status" value="1"/>
</dbReference>
<dbReference type="SUPFAM" id="SSF52080">
    <property type="entry name" value="Ribosomal proteins L15p and L18e"/>
    <property type="match status" value="1"/>
</dbReference>
<dbReference type="PROSITE" id="PS00475">
    <property type="entry name" value="RIBOSOMAL_L15"/>
    <property type="match status" value="1"/>
</dbReference>
<organism>
    <name type="scientific">Mycoplasmopsis synoviae (strain 53)</name>
    <name type="common">Mycoplasma synoviae</name>
    <dbReference type="NCBI Taxonomy" id="262723"/>
    <lineage>
        <taxon>Bacteria</taxon>
        <taxon>Bacillati</taxon>
        <taxon>Mycoplasmatota</taxon>
        <taxon>Mycoplasmoidales</taxon>
        <taxon>Metamycoplasmataceae</taxon>
        <taxon>Mycoplasmopsis</taxon>
    </lineage>
</organism>
<comment type="function">
    <text evidence="1">Binds to the 23S rRNA.</text>
</comment>
<comment type="subunit">
    <text evidence="1">Part of the 50S ribosomal subunit.</text>
</comment>
<comment type="similarity">
    <text evidence="1">Belongs to the universal ribosomal protein uL15 family.</text>
</comment>
<proteinExistence type="inferred from homology"/>
<gene>
    <name evidence="1" type="primary">rplO</name>
    <name type="ordered locus">MS53_0625</name>
</gene>
<sequence>MSLKLHNLKPTPNSRPEKHRKGRGHAAGKGKQAGKGQSGQNKRKGHRLGFEGGQTPWFRRIGKRGFKNVNHVEYQVVNLSSLEERYSNNETVTLESLFERNLIRRSVELRPVKVLAKGKLTKKLTLQVHSVSQAAREAVEKAGGKVEEL</sequence>
<name>RL15_MYCS5</name>
<evidence type="ECO:0000255" key="1">
    <source>
        <dbReference type="HAMAP-Rule" id="MF_01341"/>
    </source>
</evidence>
<evidence type="ECO:0000256" key="2">
    <source>
        <dbReference type="SAM" id="MobiDB-lite"/>
    </source>
</evidence>
<evidence type="ECO:0000305" key="3"/>
<keyword id="KW-1185">Reference proteome</keyword>
<keyword id="KW-0687">Ribonucleoprotein</keyword>
<keyword id="KW-0689">Ribosomal protein</keyword>
<keyword id="KW-0694">RNA-binding</keyword>
<keyword id="KW-0699">rRNA-binding</keyword>
<accession>Q4A5D9</accession>